<accession>P46795</accession>
<accession>O51084</accession>
<reference key="1">
    <citation type="journal article" date="1996" name="Infect. Immun.">
        <title>A glyceraldehyde-3-phosphate dehydrogenase homolog in Borrelia burgdorferi and Borrelia hermsii.</title>
        <authorList>
            <person name="Anda P."/>
            <person name="Gebbia J.A."/>
            <person name="Backenson P.B."/>
            <person name="Coleman J.L."/>
            <person name="Benach J.L."/>
        </authorList>
    </citation>
    <scope>NUCLEOTIDE SEQUENCE [GENOMIC DNA]</scope>
    <source>
        <strain>ATCC 35210 / DSM 4680 / CIP 102532 / B31</strain>
    </source>
</reference>
<reference key="2">
    <citation type="journal article" date="1997" name="Nature">
        <title>Genomic sequence of a Lyme disease spirochaete, Borrelia burgdorferi.</title>
        <authorList>
            <person name="Fraser C.M."/>
            <person name="Casjens S."/>
            <person name="Huang W.M."/>
            <person name="Sutton G.G."/>
            <person name="Clayton R.A."/>
            <person name="Lathigra R."/>
            <person name="White O."/>
            <person name="Ketchum K.A."/>
            <person name="Dodson R.J."/>
            <person name="Hickey E.K."/>
            <person name="Gwinn M.L."/>
            <person name="Dougherty B.A."/>
            <person name="Tomb J.-F."/>
            <person name="Fleischmann R.D."/>
            <person name="Richardson D.L."/>
            <person name="Peterson J.D."/>
            <person name="Kerlavage A.R."/>
            <person name="Quackenbush J."/>
            <person name="Salzberg S.L."/>
            <person name="Hanson M."/>
            <person name="van Vugt R."/>
            <person name="Palmer N."/>
            <person name="Adams M.D."/>
            <person name="Gocayne J.D."/>
            <person name="Weidman J.F."/>
            <person name="Utterback T.R."/>
            <person name="Watthey L."/>
            <person name="McDonald L.A."/>
            <person name="Artiach P."/>
            <person name="Bowman C."/>
            <person name="Garland S.A."/>
            <person name="Fujii C."/>
            <person name="Cotton M.D."/>
            <person name="Horst K."/>
            <person name="Roberts K.M."/>
            <person name="Hatch B."/>
            <person name="Smith H.O."/>
            <person name="Venter J.C."/>
        </authorList>
    </citation>
    <scope>NUCLEOTIDE SEQUENCE [LARGE SCALE GENOMIC DNA]</scope>
    <source>
        <strain>ATCC 35210 / DSM 4680 / CIP 102532 / B31</strain>
    </source>
</reference>
<reference key="3">
    <citation type="submission" date="2009-05" db="PDB data bank">
        <title>Crystal structure of glyceraldehyde-3-phosphate dehydrogenase from Borrelia burgdorferi.</title>
        <authorList>
            <consortium name="Seattle structural genomics center for infectious disease (SSGCID)"/>
        </authorList>
    </citation>
    <scope>X-RAY CRYSTALLOGRAPHY (2.20 ANGSTROMS) IN COMPLEX WITH NAD AND SUBSTRATE ANALOG</scope>
    <scope>SUBUNIT</scope>
</reference>
<gene>
    <name type="primary">gap</name>
    <name type="ordered locus">BB_0057</name>
</gene>
<sequence length="335" mass="36255">MKLAINGFGRIGRNVFKIAFERGIDIVAINDLTDPKTLAHLLKYDSTFGVYNKKVESRDGAIVVDGREIKIIAERDPKNLPWAKLGIDVVIESTGVFSSATSDKGGYLDHVNHAGAKKVILTVPAKDEIKTIVLGVNDHDINSDLKAVSNASCTTNCLAPLAKVLHESFGIEQGLMTTVHAYTNDQRILDLPHSDLRRARAAALSIIPTSTGAAKAVGLVLPELKGKLNGTSMRVPVPTGSIVDLTVQLKKKDVTKEEINSVLRKASETPELKGILGYTEDPIVSSDIKGNSHSSIVDGLETMVLENGFAKILSWYDNEFGYSTRVVDLAQKLVK</sequence>
<evidence type="ECO:0000250" key="1">
    <source>
        <dbReference type="UniProtKB" id="P00362"/>
    </source>
</evidence>
<evidence type="ECO:0000250" key="2">
    <source>
        <dbReference type="UniProtKB" id="P09124"/>
    </source>
</evidence>
<evidence type="ECO:0000269" key="3">
    <source ref="3"/>
</evidence>
<evidence type="ECO:0000305" key="4"/>
<evidence type="ECO:0000305" key="5">
    <source ref="3"/>
</evidence>
<evidence type="ECO:0007829" key="6">
    <source>
        <dbReference type="PDB" id="3HJA"/>
    </source>
</evidence>
<comment type="function">
    <text evidence="1">Catalyzes the oxidative phosphorylation of glyceraldehyde 3-phosphate (G3P) to 1,3-bisphosphoglycerate (BPG) using the cofactor NAD. The first reaction step involves the formation of a hemiacetal intermediate between G3P and a cysteine residue, and this hemiacetal intermediate is then oxidized to a thioester, with concomitant reduction of NAD to NADH. The reduced NADH is then exchanged with the second NAD, and the thioester is attacked by a nucleophilic inorganic phosphate to produce BPG.</text>
</comment>
<comment type="catalytic activity">
    <reaction evidence="2">
        <text>D-glyceraldehyde 3-phosphate + phosphate + NAD(+) = (2R)-3-phospho-glyceroyl phosphate + NADH + H(+)</text>
        <dbReference type="Rhea" id="RHEA:10300"/>
        <dbReference type="ChEBI" id="CHEBI:15378"/>
        <dbReference type="ChEBI" id="CHEBI:43474"/>
        <dbReference type="ChEBI" id="CHEBI:57540"/>
        <dbReference type="ChEBI" id="CHEBI:57604"/>
        <dbReference type="ChEBI" id="CHEBI:57945"/>
        <dbReference type="ChEBI" id="CHEBI:59776"/>
        <dbReference type="EC" id="1.2.1.12"/>
    </reaction>
</comment>
<comment type="pathway">
    <text evidence="4">Carbohydrate degradation; glycolysis; pyruvate from D-glyceraldehyde 3-phosphate: step 1/5.</text>
</comment>
<comment type="subunit">
    <text evidence="3">Homotetramer.</text>
</comment>
<comment type="subcellular location">
    <subcellularLocation>
        <location evidence="4">Cytoplasm</location>
    </subcellularLocation>
</comment>
<comment type="similarity">
    <text evidence="4">Belongs to the glyceraldehyde-3-phosphate dehydrogenase family.</text>
</comment>
<organism>
    <name type="scientific">Borreliella burgdorferi (strain ATCC 35210 / DSM 4680 / CIP 102532 / B31)</name>
    <name type="common">Borrelia burgdorferi</name>
    <dbReference type="NCBI Taxonomy" id="224326"/>
    <lineage>
        <taxon>Bacteria</taxon>
        <taxon>Pseudomonadati</taxon>
        <taxon>Spirochaetota</taxon>
        <taxon>Spirochaetia</taxon>
        <taxon>Spirochaetales</taxon>
        <taxon>Borreliaceae</taxon>
        <taxon>Borreliella</taxon>
    </lineage>
</organism>
<keyword id="KW-0002">3D-structure</keyword>
<keyword id="KW-0963">Cytoplasm</keyword>
<keyword id="KW-0324">Glycolysis</keyword>
<keyword id="KW-0520">NAD</keyword>
<keyword id="KW-0547">Nucleotide-binding</keyword>
<keyword id="KW-0560">Oxidoreductase</keyword>
<keyword id="KW-1185">Reference proteome</keyword>
<name>G3P_BORBU</name>
<protein>
    <recommendedName>
        <fullName evidence="1">Glyceraldehyde-3-phosphate dehydrogenase</fullName>
        <shortName evidence="1">GAPDH</shortName>
        <ecNumber evidence="2">1.2.1.12</ecNumber>
    </recommendedName>
    <alternativeName>
        <fullName evidence="1">NAD-dependent glyceraldehyde-3-phosphate dehydrogenase</fullName>
    </alternativeName>
</protein>
<dbReference type="EC" id="1.2.1.12" evidence="2"/>
<dbReference type="EMBL" id="U28760">
    <property type="protein sequence ID" value="AAB53930.1"/>
    <property type="molecule type" value="Genomic_DNA"/>
</dbReference>
<dbReference type="EMBL" id="AE000783">
    <property type="protein sequence ID" value="AAC66450.1"/>
    <property type="molecule type" value="Genomic_DNA"/>
</dbReference>
<dbReference type="PIR" id="A70107">
    <property type="entry name" value="A70107"/>
</dbReference>
<dbReference type="RefSeq" id="NP_212191.1">
    <property type="nucleotide sequence ID" value="NC_001318.1"/>
</dbReference>
<dbReference type="RefSeq" id="WP_002658311.1">
    <property type="nucleotide sequence ID" value="NC_001318.1"/>
</dbReference>
<dbReference type="PDB" id="3HJA">
    <property type="method" value="X-ray"/>
    <property type="resolution" value="2.20 A"/>
    <property type="chains" value="A/B/C/D=1-335"/>
</dbReference>
<dbReference type="PDBsum" id="3HJA"/>
<dbReference type="SMR" id="P46795"/>
<dbReference type="STRING" id="224326.BB_0057"/>
<dbReference type="PaxDb" id="224326-BB_0057"/>
<dbReference type="EnsemblBacteria" id="AAC66450">
    <property type="protein sequence ID" value="AAC66450"/>
    <property type="gene ID" value="BB_0057"/>
</dbReference>
<dbReference type="GeneID" id="56568160"/>
<dbReference type="KEGG" id="bbu:BB_0057"/>
<dbReference type="PATRIC" id="fig|224326.49.peg.455"/>
<dbReference type="HOGENOM" id="CLU_030140_0_2_12"/>
<dbReference type="OrthoDB" id="9803304at2"/>
<dbReference type="UniPathway" id="UPA00109">
    <property type="reaction ID" value="UER00184"/>
</dbReference>
<dbReference type="EvolutionaryTrace" id="P46795"/>
<dbReference type="Proteomes" id="UP000001807">
    <property type="component" value="Chromosome"/>
</dbReference>
<dbReference type="GO" id="GO:0005829">
    <property type="term" value="C:cytosol"/>
    <property type="evidence" value="ECO:0000314"/>
    <property type="project" value="CAFA"/>
</dbReference>
<dbReference type="GO" id="GO:0004365">
    <property type="term" value="F:glyceraldehyde-3-phosphate dehydrogenase (NAD+) (phosphorylating) activity"/>
    <property type="evidence" value="ECO:0000250"/>
    <property type="project" value="UniProtKB"/>
</dbReference>
<dbReference type="GO" id="GO:0051287">
    <property type="term" value="F:NAD binding"/>
    <property type="evidence" value="ECO:0000250"/>
    <property type="project" value="UniProtKB"/>
</dbReference>
<dbReference type="GO" id="GO:0050661">
    <property type="term" value="F:NADP binding"/>
    <property type="evidence" value="ECO:0007669"/>
    <property type="project" value="InterPro"/>
</dbReference>
<dbReference type="GO" id="GO:0006006">
    <property type="term" value="P:glucose metabolic process"/>
    <property type="evidence" value="ECO:0007669"/>
    <property type="project" value="InterPro"/>
</dbReference>
<dbReference type="GO" id="GO:0006096">
    <property type="term" value="P:glycolytic process"/>
    <property type="evidence" value="ECO:0007669"/>
    <property type="project" value="UniProtKB-UniPathway"/>
</dbReference>
<dbReference type="CDD" id="cd18126">
    <property type="entry name" value="GAPDH_I_C"/>
    <property type="match status" value="1"/>
</dbReference>
<dbReference type="CDD" id="cd05214">
    <property type="entry name" value="GAPDH_I_N"/>
    <property type="match status" value="1"/>
</dbReference>
<dbReference type="FunFam" id="3.30.360.10:FF:000002">
    <property type="entry name" value="Glyceraldehyde-3-phosphate dehydrogenase"/>
    <property type="match status" value="1"/>
</dbReference>
<dbReference type="FunFam" id="3.40.50.720:FF:000001">
    <property type="entry name" value="Glyceraldehyde-3-phosphate dehydrogenase"/>
    <property type="match status" value="1"/>
</dbReference>
<dbReference type="Gene3D" id="3.30.360.10">
    <property type="entry name" value="Dihydrodipicolinate Reductase, domain 2"/>
    <property type="match status" value="1"/>
</dbReference>
<dbReference type="Gene3D" id="3.40.50.720">
    <property type="entry name" value="NAD(P)-binding Rossmann-like Domain"/>
    <property type="match status" value="1"/>
</dbReference>
<dbReference type="InterPro" id="IPR020831">
    <property type="entry name" value="GlycerAld/Erythrose_P_DH"/>
</dbReference>
<dbReference type="InterPro" id="IPR020830">
    <property type="entry name" value="GlycerAld_3-P_DH_AS"/>
</dbReference>
<dbReference type="InterPro" id="IPR020829">
    <property type="entry name" value="GlycerAld_3-P_DH_cat"/>
</dbReference>
<dbReference type="InterPro" id="IPR020828">
    <property type="entry name" value="GlycerAld_3-P_DH_NAD(P)-bd"/>
</dbReference>
<dbReference type="InterPro" id="IPR006424">
    <property type="entry name" value="Glyceraldehyde-3-P_DH_1"/>
</dbReference>
<dbReference type="InterPro" id="IPR036291">
    <property type="entry name" value="NAD(P)-bd_dom_sf"/>
</dbReference>
<dbReference type="NCBIfam" id="TIGR01534">
    <property type="entry name" value="GAPDH-I"/>
    <property type="match status" value="1"/>
</dbReference>
<dbReference type="PANTHER" id="PTHR43148">
    <property type="entry name" value="GLYCERALDEHYDE-3-PHOSPHATE DEHYDROGENASE 2"/>
    <property type="match status" value="1"/>
</dbReference>
<dbReference type="Pfam" id="PF02800">
    <property type="entry name" value="Gp_dh_C"/>
    <property type="match status" value="1"/>
</dbReference>
<dbReference type="Pfam" id="PF00044">
    <property type="entry name" value="Gp_dh_N"/>
    <property type="match status" value="1"/>
</dbReference>
<dbReference type="PIRSF" id="PIRSF000149">
    <property type="entry name" value="GAP_DH"/>
    <property type="match status" value="1"/>
</dbReference>
<dbReference type="PRINTS" id="PR00078">
    <property type="entry name" value="G3PDHDRGNASE"/>
</dbReference>
<dbReference type="SMART" id="SM00846">
    <property type="entry name" value="Gp_dh_N"/>
    <property type="match status" value="1"/>
</dbReference>
<dbReference type="SUPFAM" id="SSF55347">
    <property type="entry name" value="Glyceraldehyde-3-phosphate dehydrogenase-like, C-terminal domain"/>
    <property type="match status" value="1"/>
</dbReference>
<dbReference type="SUPFAM" id="SSF51735">
    <property type="entry name" value="NAD(P)-binding Rossmann-fold domains"/>
    <property type="match status" value="1"/>
</dbReference>
<dbReference type="PROSITE" id="PS00071">
    <property type="entry name" value="GAPDH"/>
    <property type="match status" value="1"/>
</dbReference>
<proteinExistence type="evidence at protein level"/>
<feature type="chain" id="PRO_0000145636" description="Glyceraldehyde-3-phosphate dehydrogenase">
    <location>
        <begin position="1"/>
        <end position="335"/>
    </location>
</feature>
<feature type="active site" description="Nucleophile" evidence="5">
    <location>
        <position position="153"/>
    </location>
</feature>
<feature type="binding site" evidence="3">
    <location>
        <begin position="10"/>
        <end position="11"/>
    </location>
    <ligand>
        <name>NAD(+)</name>
        <dbReference type="ChEBI" id="CHEBI:57540"/>
    </ligand>
</feature>
<feature type="binding site" evidence="3">
    <location>
        <position position="31"/>
    </location>
    <ligand>
        <name>NAD(+)</name>
        <dbReference type="ChEBI" id="CHEBI:57540"/>
    </ligand>
</feature>
<feature type="binding site" evidence="3">
    <location>
        <position position="75"/>
    </location>
    <ligand>
        <name>NAD(+)</name>
        <dbReference type="ChEBI" id="CHEBI:57540"/>
    </ligand>
</feature>
<feature type="binding site" evidence="3">
    <location>
        <position position="122"/>
    </location>
    <ligand>
        <name>NAD(+)</name>
        <dbReference type="ChEBI" id="CHEBI:57540"/>
    </ligand>
</feature>
<feature type="binding site" evidence="3">
    <location>
        <begin position="152"/>
        <end position="154"/>
    </location>
    <ligand>
        <name>D-glyceraldehyde 3-phosphate</name>
        <dbReference type="ChEBI" id="CHEBI:59776"/>
    </ligand>
</feature>
<feature type="binding site" evidence="3">
    <location>
        <position position="183"/>
    </location>
    <ligand>
        <name>D-glyceraldehyde 3-phosphate</name>
        <dbReference type="ChEBI" id="CHEBI:59776"/>
    </ligand>
</feature>
<feature type="binding site" evidence="3">
    <location>
        <position position="184"/>
    </location>
    <ligand>
        <name>NAD(+)</name>
        <dbReference type="ChEBI" id="CHEBI:57540"/>
    </ligand>
</feature>
<feature type="binding site" evidence="3">
    <location>
        <position position="198"/>
    </location>
    <ligand>
        <name>D-glyceraldehyde 3-phosphate</name>
        <dbReference type="ChEBI" id="CHEBI:59776"/>
    </ligand>
</feature>
<feature type="binding site" evidence="3">
    <location>
        <begin position="211"/>
        <end position="212"/>
    </location>
    <ligand>
        <name>D-glyceraldehyde 3-phosphate</name>
        <dbReference type="ChEBI" id="CHEBI:59776"/>
    </ligand>
</feature>
<feature type="binding site" evidence="3">
    <location>
        <position position="234"/>
    </location>
    <ligand>
        <name>D-glyceraldehyde 3-phosphate</name>
        <dbReference type="ChEBI" id="CHEBI:59776"/>
    </ligand>
</feature>
<feature type="binding site" evidence="3">
    <location>
        <position position="318"/>
    </location>
    <ligand>
        <name>NAD(+)</name>
        <dbReference type="ChEBI" id="CHEBI:57540"/>
    </ligand>
</feature>
<feature type="site" description="Activates thiol group during catalysis" evidence="1">
    <location>
        <position position="180"/>
    </location>
</feature>
<feature type="sequence conflict" description="In Ref. 1; AAB53930." evidence="4" ref="1">
    <original>A</original>
    <variation>P</variation>
    <location>
        <position position="214"/>
    </location>
</feature>
<feature type="sequence conflict" description="In Ref. 1; AAB53930." evidence="4" ref="1">
    <original>S</original>
    <variation>P</variation>
    <location>
        <position position="294"/>
    </location>
</feature>
<feature type="strand" evidence="6">
    <location>
        <begin position="2"/>
        <end position="6"/>
    </location>
</feature>
<feature type="helix" evidence="6">
    <location>
        <begin position="10"/>
        <end position="21"/>
    </location>
</feature>
<feature type="strand" evidence="6">
    <location>
        <begin position="25"/>
        <end position="30"/>
    </location>
</feature>
<feature type="helix" evidence="6">
    <location>
        <begin position="35"/>
        <end position="43"/>
    </location>
</feature>
<feature type="turn" evidence="6">
    <location>
        <begin position="46"/>
        <end position="48"/>
    </location>
</feature>
<feature type="strand" evidence="6">
    <location>
        <begin position="55"/>
        <end position="58"/>
    </location>
</feature>
<feature type="strand" evidence="6">
    <location>
        <begin position="61"/>
        <end position="64"/>
    </location>
</feature>
<feature type="strand" evidence="6">
    <location>
        <begin position="67"/>
        <end position="72"/>
    </location>
</feature>
<feature type="helix" evidence="6">
    <location>
        <begin position="77"/>
        <end position="79"/>
    </location>
</feature>
<feature type="helix" evidence="6">
    <location>
        <begin position="82"/>
        <end position="85"/>
    </location>
</feature>
<feature type="strand" evidence="6">
    <location>
        <begin position="88"/>
        <end position="92"/>
    </location>
</feature>
<feature type="strand" evidence="6">
    <location>
        <begin position="94"/>
        <end position="96"/>
    </location>
</feature>
<feature type="helix" evidence="6">
    <location>
        <begin position="107"/>
        <end position="110"/>
    </location>
</feature>
<feature type="turn" evidence="6">
    <location>
        <begin position="111"/>
        <end position="113"/>
    </location>
</feature>
<feature type="strand" evidence="6">
    <location>
        <begin position="117"/>
        <end position="123"/>
    </location>
</feature>
<feature type="turn" evidence="6">
    <location>
        <begin position="134"/>
        <end position="136"/>
    </location>
</feature>
<feature type="helix" evidence="6">
    <location>
        <begin position="138"/>
        <end position="140"/>
    </location>
</feature>
<feature type="strand" evidence="6">
    <location>
        <begin position="147"/>
        <end position="149"/>
    </location>
</feature>
<feature type="helix" evidence="6">
    <location>
        <begin position="153"/>
        <end position="169"/>
    </location>
</feature>
<feature type="strand" evidence="6">
    <location>
        <begin position="171"/>
        <end position="181"/>
    </location>
</feature>
<feature type="strand" evidence="6">
    <location>
        <begin position="186"/>
        <end position="190"/>
    </location>
</feature>
<feature type="turn" evidence="6">
    <location>
        <begin position="196"/>
        <end position="199"/>
    </location>
</feature>
<feature type="turn" evidence="6">
    <location>
        <begin position="202"/>
        <end position="204"/>
    </location>
</feature>
<feature type="strand" evidence="6">
    <location>
        <begin position="207"/>
        <end position="210"/>
    </location>
</feature>
<feature type="turn" evidence="6">
    <location>
        <begin position="213"/>
        <end position="216"/>
    </location>
</feature>
<feature type="helix" evidence="6">
    <location>
        <begin position="217"/>
        <end position="220"/>
    </location>
</feature>
<feature type="helix" evidence="6">
    <location>
        <begin position="222"/>
        <end position="224"/>
    </location>
</feature>
<feature type="turn" evidence="6">
    <location>
        <begin position="225"/>
        <end position="227"/>
    </location>
</feature>
<feature type="strand" evidence="6">
    <location>
        <begin position="228"/>
        <end position="236"/>
    </location>
</feature>
<feature type="strand" evidence="6">
    <location>
        <begin position="241"/>
        <end position="250"/>
    </location>
</feature>
<feature type="helix" evidence="6">
    <location>
        <begin position="256"/>
        <end position="268"/>
    </location>
</feature>
<feature type="turn" evidence="6">
    <location>
        <begin position="270"/>
        <end position="275"/>
    </location>
</feature>
<feature type="strand" evidence="6">
    <location>
        <begin position="276"/>
        <end position="279"/>
    </location>
</feature>
<feature type="helix" evidence="6">
    <location>
        <begin position="285"/>
        <end position="288"/>
    </location>
</feature>
<feature type="strand" evidence="6">
    <location>
        <begin position="294"/>
        <end position="298"/>
    </location>
</feature>
<feature type="helix" evidence="6">
    <location>
        <begin position="299"/>
        <end position="301"/>
    </location>
</feature>
<feature type="strand" evidence="6">
    <location>
        <begin position="309"/>
        <end position="316"/>
    </location>
</feature>
<feature type="helix" evidence="6">
    <location>
        <begin position="320"/>
        <end position="333"/>
    </location>
</feature>